<comment type="function">
    <text evidence="1">Catalyzes the irreversible NADPH-dependent deamination of GMP to IMP. It functions in the conversion of nucleobase, nucleoside and nucleotide derivatives of G to A nucleotides, and in maintaining the intracellular balance of A and G nucleotides.</text>
</comment>
<comment type="catalytic activity">
    <reaction evidence="1">
        <text>IMP + NH4(+) + NADP(+) = GMP + NADPH + 2 H(+)</text>
        <dbReference type="Rhea" id="RHEA:17185"/>
        <dbReference type="ChEBI" id="CHEBI:15378"/>
        <dbReference type="ChEBI" id="CHEBI:28938"/>
        <dbReference type="ChEBI" id="CHEBI:57783"/>
        <dbReference type="ChEBI" id="CHEBI:58053"/>
        <dbReference type="ChEBI" id="CHEBI:58115"/>
        <dbReference type="ChEBI" id="CHEBI:58349"/>
        <dbReference type="EC" id="1.7.1.7"/>
    </reaction>
</comment>
<comment type="similarity">
    <text evidence="1">Belongs to the IMPDH/GMPR family. GuaC type 2 subfamily.</text>
</comment>
<comment type="sequence caution" evidence="2">
    <conflict type="erroneous initiation">
        <sequence resource="EMBL-CDS" id="ABP89781"/>
    </conflict>
</comment>
<name>GUAC_STRSY</name>
<organism>
    <name type="scientific">Streptococcus suis (strain 05ZYH33)</name>
    <dbReference type="NCBI Taxonomy" id="391295"/>
    <lineage>
        <taxon>Bacteria</taxon>
        <taxon>Bacillati</taxon>
        <taxon>Bacillota</taxon>
        <taxon>Bacilli</taxon>
        <taxon>Lactobacillales</taxon>
        <taxon>Streptococcaceae</taxon>
        <taxon>Streptococcus</taxon>
    </lineage>
</organism>
<dbReference type="EC" id="1.7.1.7" evidence="1"/>
<dbReference type="EMBL" id="CP000407">
    <property type="protein sequence ID" value="ABP89781.1"/>
    <property type="status" value="ALT_INIT"/>
    <property type="molecule type" value="Genomic_DNA"/>
</dbReference>
<dbReference type="SMR" id="A4VUJ2"/>
<dbReference type="STRING" id="391295.SSU05_0815"/>
<dbReference type="KEGG" id="ssu:SSU05_0815"/>
<dbReference type="eggNOG" id="COG0516">
    <property type="taxonomic scope" value="Bacteria"/>
</dbReference>
<dbReference type="HOGENOM" id="CLU_022552_5_0_9"/>
<dbReference type="GO" id="GO:0005829">
    <property type="term" value="C:cytosol"/>
    <property type="evidence" value="ECO:0007669"/>
    <property type="project" value="TreeGrafter"/>
</dbReference>
<dbReference type="GO" id="GO:1902560">
    <property type="term" value="C:GMP reductase complex"/>
    <property type="evidence" value="ECO:0007669"/>
    <property type="project" value="InterPro"/>
</dbReference>
<dbReference type="GO" id="GO:0003920">
    <property type="term" value="F:GMP reductase activity"/>
    <property type="evidence" value="ECO:0007669"/>
    <property type="project" value="UniProtKB-UniRule"/>
</dbReference>
<dbReference type="GO" id="GO:0006163">
    <property type="term" value="P:purine nucleotide metabolic process"/>
    <property type="evidence" value="ECO:0007669"/>
    <property type="project" value="UniProtKB-UniRule"/>
</dbReference>
<dbReference type="CDD" id="cd00381">
    <property type="entry name" value="IMPDH"/>
    <property type="match status" value="1"/>
</dbReference>
<dbReference type="FunFam" id="3.20.20.70:FF:000079">
    <property type="entry name" value="GMP reductase"/>
    <property type="match status" value="1"/>
</dbReference>
<dbReference type="Gene3D" id="3.20.20.70">
    <property type="entry name" value="Aldolase class I"/>
    <property type="match status" value="1"/>
</dbReference>
<dbReference type="HAMAP" id="MF_01511">
    <property type="entry name" value="GMP_reduct_type2"/>
    <property type="match status" value="1"/>
</dbReference>
<dbReference type="InterPro" id="IPR013785">
    <property type="entry name" value="Aldolase_TIM"/>
</dbReference>
<dbReference type="InterPro" id="IPR050139">
    <property type="entry name" value="GMP_reductase"/>
</dbReference>
<dbReference type="InterPro" id="IPR005994">
    <property type="entry name" value="GuaC_type_2"/>
</dbReference>
<dbReference type="InterPro" id="IPR015875">
    <property type="entry name" value="IMP_DH/GMP_Rdtase_CS"/>
</dbReference>
<dbReference type="InterPro" id="IPR001093">
    <property type="entry name" value="IMP_DH_GMPRt"/>
</dbReference>
<dbReference type="NCBIfam" id="TIGR01306">
    <property type="entry name" value="GMP_reduct_2"/>
    <property type="match status" value="1"/>
</dbReference>
<dbReference type="NCBIfam" id="NF003966">
    <property type="entry name" value="PRK05458.1"/>
    <property type="match status" value="1"/>
</dbReference>
<dbReference type="PANTHER" id="PTHR43170">
    <property type="entry name" value="GMP REDUCTASE"/>
    <property type="match status" value="1"/>
</dbReference>
<dbReference type="PANTHER" id="PTHR43170:SF5">
    <property type="entry name" value="GMP REDUCTASE"/>
    <property type="match status" value="1"/>
</dbReference>
<dbReference type="Pfam" id="PF00478">
    <property type="entry name" value="IMPDH"/>
    <property type="match status" value="1"/>
</dbReference>
<dbReference type="PIRSF" id="PIRSF036500">
    <property type="entry name" value="GMP_red_Firmic"/>
    <property type="match status" value="1"/>
</dbReference>
<dbReference type="SMART" id="SM01240">
    <property type="entry name" value="IMPDH"/>
    <property type="match status" value="1"/>
</dbReference>
<dbReference type="SUPFAM" id="SSF51412">
    <property type="entry name" value="Inosine monophosphate dehydrogenase (IMPDH)"/>
    <property type="match status" value="1"/>
</dbReference>
<dbReference type="PROSITE" id="PS00487">
    <property type="entry name" value="IMP_DH_GMP_RED"/>
    <property type="match status" value="1"/>
</dbReference>
<evidence type="ECO:0000255" key="1">
    <source>
        <dbReference type="HAMAP-Rule" id="MF_01511"/>
    </source>
</evidence>
<evidence type="ECO:0000305" key="2"/>
<protein>
    <recommendedName>
        <fullName evidence="1">GMP reductase</fullName>
        <ecNumber evidence="1">1.7.1.7</ecNumber>
    </recommendedName>
    <alternativeName>
        <fullName evidence="1">Guanosine 5'-monophosphate oxidoreductase</fullName>
        <shortName evidence="1">Guanosine monophosphate reductase</shortName>
    </alternativeName>
</protein>
<sequence>MFNETPVFDYEDIQLIPNKCIINSRSEADTTVTLGKYSFKLPVVPANMQTIIDEDVAEMLAKDGYFYIMHRFDEAGRIPFIKRMHEQGLIASISVGVKEYEYEFVTSLKADAPEFITIDIAHGHAESVIKMIQHIKKELPETFVIAGNVGTPEAVRELENAGADATKVGIGPGKVCITKVKTGFGTGGWQLAALRWCAKAARKPIIADGGIRTHGDIAKSIRFGASMVMIGSLFAGHIESPGKTIEVDGEKFKEYYGSASEYQKGAYKNVEGKKILLPAKGHLEDTLVEMEQDLQSSISYAGGRDITSLKHVDYVIVKNSIWNGDSI</sequence>
<gene>
    <name evidence="1" type="primary">guaC</name>
    <name type="ordered locus">SSU05_0815</name>
</gene>
<accession>A4VUJ2</accession>
<reference key="1">
    <citation type="journal article" date="2007" name="PLoS ONE">
        <title>A glimpse of streptococcal toxic shock syndrome from comparative genomics of S. suis 2 Chinese isolates.</title>
        <authorList>
            <person name="Chen C."/>
            <person name="Tang J."/>
            <person name="Dong W."/>
            <person name="Wang C."/>
            <person name="Feng Y."/>
            <person name="Wang J."/>
            <person name="Zheng F."/>
            <person name="Pan X."/>
            <person name="Liu D."/>
            <person name="Li M."/>
            <person name="Song Y."/>
            <person name="Zhu X."/>
            <person name="Sun H."/>
            <person name="Feng T."/>
            <person name="Guo Z."/>
            <person name="Ju A."/>
            <person name="Ge J."/>
            <person name="Dong Y."/>
            <person name="Sun W."/>
            <person name="Jiang Y."/>
            <person name="Wang J."/>
            <person name="Yan J."/>
            <person name="Yang H."/>
            <person name="Wang X."/>
            <person name="Gao G.F."/>
            <person name="Yang R."/>
            <person name="Wang J."/>
            <person name="Yu J."/>
        </authorList>
    </citation>
    <scope>NUCLEOTIDE SEQUENCE [LARGE SCALE GENOMIC DNA]</scope>
    <source>
        <strain>05ZYH33</strain>
    </source>
</reference>
<keyword id="KW-0521">NADP</keyword>
<keyword id="KW-0560">Oxidoreductase</keyword>
<feature type="chain" id="PRO_0000296655" description="GMP reductase">
    <location>
        <begin position="1"/>
        <end position="327"/>
    </location>
</feature>
<feature type="active site" description="Thioimidate intermediate" evidence="1">
    <location>
        <position position="176"/>
    </location>
</feature>
<feature type="binding site" evidence="1">
    <location>
        <begin position="205"/>
        <end position="228"/>
    </location>
    <ligand>
        <name>NADP(+)</name>
        <dbReference type="ChEBI" id="CHEBI:58349"/>
    </ligand>
</feature>
<proteinExistence type="inferred from homology"/>